<evidence type="ECO:0000250" key="1"/>
<evidence type="ECO:0000255" key="2">
    <source>
        <dbReference type="PROSITE-ProRule" id="PRU00303"/>
    </source>
</evidence>
<sequence>MKPFLRWCFVATALTLAGCSNTSWRKSEVLAVPLQPTLQQEVILARMEQILASRALTDDERAQLLYERGVLYDSLGLRALARNDFSQALAIRPDMPEVFNYLGIYLTQAGNFDAAYEAFDSVLELDPTYNYAHLNRGIALYYGGRDKLAQDDLLAFYQDDPNDPFRSLWLYLAEQKLDEKQAKEVLKQHFEKSDKEQWGWNIVEFYLGNISEQTLMERLKADATDNTSLAEHLSETNFYLGKYYLSLGDSDSATALFKLAVANNVHNFVEHRYALLELSLLGQDQDDLAESDQQ</sequence>
<dbReference type="EMBL" id="CP000036">
    <property type="protein sequence ID" value="ABB67716.1"/>
    <property type="molecule type" value="Genomic_DNA"/>
</dbReference>
<dbReference type="RefSeq" id="WP_000802084.1">
    <property type="nucleotide sequence ID" value="NC_007613.1"/>
</dbReference>
<dbReference type="SMR" id="Q31W42"/>
<dbReference type="KEGG" id="sbo:SBO_3219"/>
<dbReference type="HOGENOM" id="CLU_071600_0_0_6"/>
<dbReference type="Proteomes" id="UP000007067">
    <property type="component" value="Chromosome"/>
</dbReference>
<dbReference type="GO" id="GO:0005886">
    <property type="term" value="C:plasma membrane"/>
    <property type="evidence" value="ECO:0007669"/>
    <property type="project" value="UniProtKB-SubCell"/>
</dbReference>
<dbReference type="GO" id="GO:0051301">
    <property type="term" value="P:cell division"/>
    <property type="evidence" value="ECO:0007669"/>
    <property type="project" value="UniProtKB-KW"/>
</dbReference>
<dbReference type="FunFam" id="1.25.40.10:FF:000021">
    <property type="entry name" value="Lipoprotein NlpI"/>
    <property type="match status" value="1"/>
</dbReference>
<dbReference type="Gene3D" id="1.25.40.10">
    <property type="entry name" value="Tetratricopeptide repeat domain"/>
    <property type="match status" value="1"/>
</dbReference>
<dbReference type="InterPro" id="IPR023605">
    <property type="entry name" value="Lipoprotein_NlpI"/>
</dbReference>
<dbReference type="InterPro" id="IPR011990">
    <property type="entry name" value="TPR-like_helical_dom_sf"/>
</dbReference>
<dbReference type="InterPro" id="IPR019734">
    <property type="entry name" value="TPR_rpt"/>
</dbReference>
<dbReference type="InterPro" id="IPR050498">
    <property type="entry name" value="Ycf3"/>
</dbReference>
<dbReference type="NCBIfam" id="NF008391">
    <property type="entry name" value="PRK11189.1"/>
    <property type="match status" value="1"/>
</dbReference>
<dbReference type="PANTHER" id="PTHR44858">
    <property type="entry name" value="TETRATRICOPEPTIDE REPEAT PROTEIN 6"/>
    <property type="match status" value="1"/>
</dbReference>
<dbReference type="PANTHER" id="PTHR44858:SF1">
    <property type="entry name" value="UDP-N-ACETYLGLUCOSAMINE--PEPTIDE N-ACETYLGLUCOSAMINYLTRANSFERASE SPINDLY-RELATED"/>
    <property type="match status" value="1"/>
</dbReference>
<dbReference type="Pfam" id="PF13432">
    <property type="entry name" value="TPR_16"/>
    <property type="match status" value="1"/>
</dbReference>
<dbReference type="PIRSF" id="PIRSF004654">
    <property type="entry name" value="NlpI"/>
    <property type="match status" value="1"/>
</dbReference>
<dbReference type="SMART" id="SM00028">
    <property type="entry name" value="TPR"/>
    <property type="match status" value="3"/>
</dbReference>
<dbReference type="SUPFAM" id="SSF48452">
    <property type="entry name" value="TPR-like"/>
    <property type="match status" value="1"/>
</dbReference>
<dbReference type="PROSITE" id="PS51257">
    <property type="entry name" value="PROKAR_LIPOPROTEIN"/>
    <property type="match status" value="1"/>
</dbReference>
<dbReference type="PROSITE" id="PS50005">
    <property type="entry name" value="TPR"/>
    <property type="match status" value="3"/>
</dbReference>
<dbReference type="PROSITE" id="PS50293">
    <property type="entry name" value="TPR_REGION"/>
    <property type="match status" value="2"/>
</dbReference>
<gene>
    <name type="primary">nlpI</name>
    <name type="synonym">yhbM</name>
    <name type="ordered locus">SBO_3219</name>
</gene>
<keyword id="KW-0131">Cell cycle</keyword>
<keyword id="KW-0132">Cell division</keyword>
<keyword id="KW-1003">Cell membrane</keyword>
<keyword id="KW-0449">Lipoprotein</keyword>
<keyword id="KW-0472">Membrane</keyword>
<keyword id="KW-0564">Palmitate</keyword>
<keyword id="KW-0677">Repeat</keyword>
<keyword id="KW-0732">Signal</keyword>
<keyword id="KW-0802">TPR repeat</keyword>
<name>NLPI_SHIBS</name>
<feature type="signal peptide" evidence="2">
    <location>
        <begin position="1"/>
        <end position="18"/>
    </location>
</feature>
<feature type="chain" id="PRO_0000413483" description="Lipoprotein NlpI">
    <location>
        <begin position="19"/>
        <end position="294"/>
    </location>
</feature>
<feature type="repeat" description="TPR 1">
    <location>
        <begin position="62"/>
        <end position="95"/>
    </location>
</feature>
<feature type="repeat" description="TPR 2">
    <location>
        <begin position="96"/>
        <end position="129"/>
    </location>
</feature>
<feature type="repeat" description="TPR 3">
    <location>
        <begin position="234"/>
        <end position="267"/>
    </location>
</feature>
<feature type="lipid moiety-binding region" description="N-palmitoyl cysteine" evidence="2">
    <location>
        <position position="19"/>
    </location>
</feature>
<feature type="lipid moiety-binding region" description="S-diacylglycerol cysteine" evidence="2">
    <location>
        <position position="19"/>
    </location>
</feature>
<comment type="function">
    <text evidence="1">May be involved in cell division. May play a role in bacterial septation or regulation of cell wall degradation during cell division (By similarity).</text>
</comment>
<comment type="subunit">
    <text evidence="1">Homodimer.</text>
</comment>
<comment type="subcellular location">
    <subcellularLocation>
        <location evidence="2">Cell membrane</location>
        <topology evidence="2">Lipid-anchor</topology>
    </subcellularLocation>
</comment>
<organism>
    <name type="scientific">Shigella boydii serotype 4 (strain Sb227)</name>
    <dbReference type="NCBI Taxonomy" id="300268"/>
    <lineage>
        <taxon>Bacteria</taxon>
        <taxon>Pseudomonadati</taxon>
        <taxon>Pseudomonadota</taxon>
        <taxon>Gammaproteobacteria</taxon>
        <taxon>Enterobacterales</taxon>
        <taxon>Enterobacteriaceae</taxon>
        <taxon>Shigella</taxon>
    </lineage>
</organism>
<proteinExistence type="inferred from homology"/>
<protein>
    <recommendedName>
        <fullName>Lipoprotein NlpI</fullName>
    </recommendedName>
</protein>
<accession>Q31W42</accession>
<reference key="1">
    <citation type="journal article" date="2005" name="Nucleic Acids Res.">
        <title>Genome dynamics and diversity of Shigella species, the etiologic agents of bacillary dysentery.</title>
        <authorList>
            <person name="Yang F."/>
            <person name="Yang J."/>
            <person name="Zhang X."/>
            <person name="Chen L."/>
            <person name="Jiang Y."/>
            <person name="Yan Y."/>
            <person name="Tang X."/>
            <person name="Wang J."/>
            <person name="Xiong Z."/>
            <person name="Dong J."/>
            <person name="Xue Y."/>
            <person name="Zhu Y."/>
            <person name="Xu X."/>
            <person name="Sun L."/>
            <person name="Chen S."/>
            <person name="Nie H."/>
            <person name="Peng J."/>
            <person name="Xu J."/>
            <person name="Wang Y."/>
            <person name="Yuan Z."/>
            <person name="Wen Y."/>
            <person name="Yao Z."/>
            <person name="Shen Y."/>
            <person name="Qiang B."/>
            <person name="Hou Y."/>
            <person name="Yu J."/>
            <person name="Jin Q."/>
        </authorList>
    </citation>
    <scope>NUCLEOTIDE SEQUENCE [LARGE SCALE GENOMIC DNA]</scope>
    <source>
        <strain>Sb227</strain>
    </source>
</reference>